<accession>Q6G8M0</accession>
<proteinExistence type="inferred from homology"/>
<dbReference type="EMBL" id="BX571857">
    <property type="protein sequence ID" value="CAG43436.1"/>
    <property type="molecule type" value="Genomic_DNA"/>
</dbReference>
<dbReference type="RefSeq" id="WP_000777188.1">
    <property type="nucleotide sequence ID" value="NC_002953.3"/>
</dbReference>
<dbReference type="SMR" id="Q6G8M0"/>
<dbReference type="KEGG" id="sas:SAS1634"/>
<dbReference type="HOGENOM" id="CLU_070010_4_1_9"/>
<dbReference type="GO" id="GO:0016787">
    <property type="term" value="F:hydrolase activity"/>
    <property type="evidence" value="ECO:0007669"/>
    <property type="project" value="UniProtKB-UniRule"/>
</dbReference>
<dbReference type="CDD" id="cd06262">
    <property type="entry name" value="metallo-hydrolase-like_MBL-fold"/>
    <property type="match status" value="1"/>
</dbReference>
<dbReference type="Gene3D" id="3.60.15.10">
    <property type="entry name" value="Ribonuclease Z/Hydroxyacylglutathione hydrolase-like"/>
    <property type="match status" value="1"/>
</dbReference>
<dbReference type="HAMAP" id="MF_00457">
    <property type="entry name" value="UPF0173"/>
    <property type="match status" value="1"/>
</dbReference>
<dbReference type="InterPro" id="IPR001279">
    <property type="entry name" value="Metallo-B-lactamas"/>
</dbReference>
<dbReference type="InterPro" id="IPR036866">
    <property type="entry name" value="RibonucZ/Hydroxyglut_hydro"/>
</dbReference>
<dbReference type="InterPro" id="IPR022877">
    <property type="entry name" value="UPF0173"/>
</dbReference>
<dbReference type="InterPro" id="IPR050114">
    <property type="entry name" value="UPF0173_UPF0282_UlaG_hydrolase"/>
</dbReference>
<dbReference type="NCBIfam" id="NF001911">
    <property type="entry name" value="PRK00685.1"/>
    <property type="match status" value="1"/>
</dbReference>
<dbReference type="PANTHER" id="PTHR43546:SF3">
    <property type="entry name" value="UPF0173 METAL-DEPENDENT HYDROLASE MJ1163"/>
    <property type="match status" value="1"/>
</dbReference>
<dbReference type="PANTHER" id="PTHR43546">
    <property type="entry name" value="UPF0173 METAL-DEPENDENT HYDROLASE MJ1163-RELATED"/>
    <property type="match status" value="1"/>
</dbReference>
<dbReference type="Pfam" id="PF12706">
    <property type="entry name" value="Lactamase_B_2"/>
    <property type="match status" value="1"/>
</dbReference>
<dbReference type="SMART" id="SM00849">
    <property type="entry name" value="Lactamase_B"/>
    <property type="match status" value="1"/>
</dbReference>
<dbReference type="SUPFAM" id="SSF56281">
    <property type="entry name" value="Metallo-hydrolase/oxidoreductase"/>
    <property type="match status" value="1"/>
</dbReference>
<name>Y1634_STAAS</name>
<reference key="1">
    <citation type="journal article" date="2004" name="Proc. Natl. Acad. Sci. U.S.A.">
        <title>Complete genomes of two clinical Staphylococcus aureus strains: evidence for the rapid evolution of virulence and drug resistance.</title>
        <authorList>
            <person name="Holden M.T.G."/>
            <person name="Feil E.J."/>
            <person name="Lindsay J.A."/>
            <person name="Peacock S.J."/>
            <person name="Day N.P.J."/>
            <person name="Enright M.C."/>
            <person name="Foster T.J."/>
            <person name="Moore C.E."/>
            <person name="Hurst L."/>
            <person name="Atkin R."/>
            <person name="Barron A."/>
            <person name="Bason N."/>
            <person name="Bentley S.D."/>
            <person name="Chillingworth C."/>
            <person name="Chillingworth T."/>
            <person name="Churcher C."/>
            <person name="Clark L."/>
            <person name="Corton C."/>
            <person name="Cronin A."/>
            <person name="Doggett J."/>
            <person name="Dowd L."/>
            <person name="Feltwell T."/>
            <person name="Hance Z."/>
            <person name="Harris B."/>
            <person name="Hauser H."/>
            <person name="Holroyd S."/>
            <person name="Jagels K."/>
            <person name="James K.D."/>
            <person name="Lennard N."/>
            <person name="Line A."/>
            <person name="Mayes R."/>
            <person name="Moule S."/>
            <person name="Mungall K."/>
            <person name="Ormond D."/>
            <person name="Quail M.A."/>
            <person name="Rabbinowitsch E."/>
            <person name="Rutherford K.M."/>
            <person name="Sanders M."/>
            <person name="Sharp S."/>
            <person name="Simmonds M."/>
            <person name="Stevens K."/>
            <person name="Whitehead S."/>
            <person name="Barrell B.G."/>
            <person name="Spratt B.G."/>
            <person name="Parkhill J."/>
        </authorList>
    </citation>
    <scope>NUCLEOTIDE SEQUENCE [LARGE SCALE GENOMIC DNA]</scope>
    <source>
        <strain>MSSA476</strain>
    </source>
</reference>
<comment type="similarity">
    <text evidence="1">Belongs to the UPF0173 family.</text>
</comment>
<keyword id="KW-0378">Hydrolase</keyword>
<evidence type="ECO:0000255" key="1">
    <source>
        <dbReference type="HAMAP-Rule" id="MF_00457"/>
    </source>
</evidence>
<protein>
    <recommendedName>
        <fullName evidence="1">UPF0173 metal-dependent hydrolase SAS1634</fullName>
    </recommendedName>
</protein>
<gene>
    <name type="ordered locus">SAS1634</name>
</gene>
<organism>
    <name type="scientific">Staphylococcus aureus (strain MSSA476)</name>
    <dbReference type="NCBI Taxonomy" id="282459"/>
    <lineage>
        <taxon>Bacteria</taxon>
        <taxon>Bacillati</taxon>
        <taxon>Bacillota</taxon>
        <taxon>Bacilli</taxon>
        <taxon>Bacillales</taxon>
        <taxon>Staphylococcaceae</taxon>
        <taxon>Staphylococcus</taxon>
    </lineage>
</organism>
<feature type="chain" id="PRO_0000156381" description="UPF0173 metal-dependent hydrolase SAS1634">
    <location>
        <begin position="1"/>
        <end position="229"/>
    </location>
</feature>
<sequence length="229" mass="25251">MKLSFHGQSTIYLEGNNKKVIVDPFISNNPKCDLNIETVQVDYIVLTHGHFDHFGDVVELAKKTGATVIGSAEMADYLSSYHGVENVHGMNIGGKANFDFGSVKFVQAFHSSSFTHENGIPVYLGMPMGIVFEVEGKTIYHTGDTGLFSDMSLIAKRHPVDVCFVPIGDNFTMGIDDASYAINEFIKPKISVPIHYDTFPLIEQDPQQFKDAVNVGDVQILKPGESVQF</sequence>